<reference key="1">
    <citation type="journal article" date="1995" name="Toxicon">
        <title>Cloning and characterization of the cDNAs encoding Na+ channel-specific toxins 1 and 2 of the scorpion Centruroides noxius Hoffmann.</title>
        <authorList>
            <person name="Vazquez A."/>
            <person name="Tapia J.V."/>
            <person name="Eliason W.K."/>
            <person name="Martin B.M."/>
            <person name="Lebreton F."/>
            <person name="Delepierre M."/>
            <person name="Possani L.D."/>
            <person name="Becerril B."/>
        </authorList>
    </citation>
    <scope>NUCLEOTIDE SEQUENCE [MRNA]</scope>
    <scope>AMIDATION AT SER-82</scope>
    <source>
        <tissue>Venom</tissue>
        <tissue>Venom gland</tissue>
    </source>
</reference>
<reference key="2">
    <citation type="journal article" date="1992" name="Eur. J. Biochem.">
        <title>Amino acid sequence and immunological characterization with monoclonal antibodies of two toxins from the venom of the scorpion Centruroides noxius Hoffmann.</title>
        <authorList>
            <person name="Zamudio F.Z."/>
            <person name="Saavedra R."/>
            <person name="Martin B.M."/>
            <person name="Gurrola G.B."/>
            <person name="Herion P."/>
            <person name="Possani L.D."/>
        </authorList>
    </citation>
    <scope>PROTEIN SEQUENCE OF 17-82</scope>
    <source>
        <tissue>Venom</tissue>
    </source>
</reference>
<reference key="3">
    <citation type="submission" date="2003-07" db="EMBL/GenBank/DDBJ databases">
        <title>Alignment of beta-toxin nucleotide sequences.</title>
        <authorList>
            <person name="Zhu S."/>
        </authorList>
    </citation>
    <scope>NUCLEOTIDE SEQUENCE [GENOMIC DNA] OF 17-81</scope>
</reference>
<reference key="4">
    <citation type="journal article" date="1982" name="Toxicon">
        <title>N-terminal sequence of toxin II.9.2.2 from the venom of the Mexican scorpion Centruroides noxius.</title>
        <authorList>
            <person name="Martin B.M."/>
            <person name="Possani L.D."/>
            <person name="Dent M.A.R."/>
            <person name="Maelicke A."/>
        </authorList>
    </citation>
    <scope>PROTEIN SEQUENCE OF 17-46</scope>
    <scope>SUBCELLULAR LOCATION</scope>
    <source>
        <tissue>Venom</tissue>
    </source>
</reference>
<reference key="5">
    <citation type="journal article" date="1994" name="FEBS Lett.">
        <title>The disulfide bridges of toxin 2 from the scorpion Centruroides noxius Hoffmann and its three-dimensional structure calculated using the coordinates of variant 3 from Centruroides sculpturatus.</title>
        <authorList>
            <person name="Gurrola G.B."/>
            <person name="Moreno-Hagelsieb G."/>
            <person name="Zamudio F.Z."/>
            <person name="Garcia M."/>
            <person name="Soberon X."/>
            <person name="Possani L.D."/>
        </authorList>
    </citation>
    <scope>DISULFIDE BONDS</scope>
</reference>
<reference key="6">
    <citation type="journal article" date="2019" name="Toxins">
        <title>Generation of a broadly cross-neutralizing antibody fragment against several mexican scorpion venoms.</title>
        <authorList>
            <person name="Riano-Umbarila L."/>
            <person name="Gomez-Ramirez I.V."/>
            <person name="Ledezma-Candanoza L.M."/>
            <person name="Olamendi-Portugal T."/>
            <person name="Rodriguez-Rodriguez E.R."/>
            <person name="Fernandez-Taboada G."/>
            <person name="Possani L.D."/>
            <person name="Becerril B."/>
        </authorList>
    </citation>
    <scope>NEUTRALIZATION BY ANTIBODY</scope>
</reference>
<reference key="7">
    <citation type="journal article" date="1999" name="J. Mol. Biol.">
        <title>Solution structure of toxin 2 from Centruroides noxius Hoffmann, a beta-scorpion neurotoxin acting on sodium channels.</title>
        <authorList>
            <person name="Pintar A."/>
            <person name="Possani L.D."/>
            <person name="Delepierre M."/>
        </authorList>
    </citation>
    <scope>STRUCTURE BY NMR OF 17-82</scope>
    <scope>DISULFIDE BONDS</scope>
</reference>
<dbReference type="EMBL" id="S81096">
    <property type="protein sequence ID" value="AAB36086.1"/>
    <property type="molecule type" value="mRNA"/>
</dbReference>
<dbReference type="EMBL" id="AY351310">
    <property type="protein sequence ID" value="AAR08045.1"/>
    <property type="molecule type" value="Genomic_DNA"/>
</dbReference>
<dbReference type="PIR" id="T10893">
    <property type="entry name" value="NTSR2N"/>
</dbReference>
<dbReference type="PDB" id="1CN2">
    <property type="method" value="NMR"/>
    <property type="chains" value="A=17-82"/>
</dbReference>
<dbReference type="PDB" id="2YBR">
    <property type="method" value="X-ray"/>
    <property type="resolution" value="2.55 A"/>
    <property type="chains" value="C/F/I=17-82"/>
</dbReference>
<dbReference type="PDB" id="2YC1">
    <property type="method" value="X-ray"/>
    <property type="resolution" value="1.90 A"/>
    <property type="chains" value="C/F=17-82"/>
</dbReference>
<dbReference type="PDB" id="4V1D">
    <property type="method" value="X-ray"/>
    <property type="resolution" value="3.10 A"/>
    <property type="chains" value="C=17-82"/>
</dbReference>
<dbReference type="PDBsum" id="1CN2"/>
<dbReference type="PDBsum" id="2YBR"/>
<dbReference type="PDBsum" id="2YC1"/>
<dbReference type="PDBsum" id="4V1D"/>
<dbReference type="BMRB" id="P01495"/>
<dbReference type="SMR" id="P01495"/>
<dbReference type="ABCD" id="P01495">
    <property type="antibodies" value="8 sequenced antibodies"/>
</dbReference>
<dbReference type="EvolutionaryTrace" id="P01495"/>
<dbReference type="GO" id="GO:0005576">
    <property type="term" value="C:extracellular region"/>
    <property type="evidence" value="ECO:0007669"/>
    <property type="project" value="UniProtKB-SubCell"/>
</dbReference>
<dbReference type="GO" id="GO:0019871">
    <property type="term" value="F:sodium channel inhibitor activity"/>
    <property type="evidence" value="ECO:0007669"/>
    <property type="project" value="InterPro"/>
</dbReference>
<dbReference type="GO" id="GO:0090729">
    <property type="term" value="F:toxin activity"/>
    <property type="evidence" value="ECO:0007669"/>
    <property type="project" value="UniProtKB-KW"/>
</dbReference>
<dbReference type="GO" id="GO:0006952">
    <property type="term" value="P:defense response"/>
    <property type="evidence" value="ECO:0007669"/>
    <property type="project" value="InterPro"/>
</dbReference>
<dbReference type="CDD" id="cd23106">
    <property type="entry name" value="neurotoxins_LC_scorpion"/>
    <property type="match status" value="1"/>
</dbReference>
<dbReference type="FunFam" id="3.30.30.10:FF:000002">
    <property type="entry name" value="Alpha-like toxin BmK-M1"/>
    <property type="match status" value="1"/>
</dbReference>
<dbReference type="Gene3D" id="3.30.30.10">
    <property type="entry name" value="Knottin, scorpion toxin-like"/>
    <property type="match status" value="1"/>
</dbReference>
<dbReference type="InterPro" id="IPR044062">
    <property type="entry name" value="LCN-type_CS_alpha_beta_dom"/>
</dbReference>
<dbReference type="InterPro" id="IPR003614">
    <property type="entry name" value="Scorpion_toxin-like"/>
</dbReference>
<dbReference type="InterPro" id="IPR036574">
    <property type="entry name" value="Scorpion_toxin-like_sf"/>
</dbReference>
<dbReference type="InterPro" id="IPR018218">
    <property type="entry name" value="Scorpion_toxinL"/>
</dbReference>
<dbReference type="InterPro" id="IPR002061">
    <property type="entry name" value="Scorpion_toxinL/defensin"/>
</dbReference>
<dbReference type="Pfam" id="PF00537">
    <property type="entry name" value="Toxin_3"/>
    <property type="match status" value="1"/>
</dbReference>
<dbReference type="PRINTS" id="PR00285">
    <property type="entry name" value="SCORPNTOXIN"/>
</dbReference>
<dbReference type="SMART" id="SM00505">
    <property type="entry name" value="Knot1"/>
    <property type="match status" value="1"/>
</dbReference>
<dbReference type="SUPFAM" id="SSF57095">
    <property type="entry name" value="Scorpion toxin-like"/>
    <property type="match status" value="1"/>
</dbReference>
<dbReference type="PROSITE" id="PS51863">
    <property type="entry name" value="LCN_CSAB"/>
    <property type="match status" value="1"/>
</dbReference>
<comment type="function">
    <text>Mammal beta-toxins bind voltage-independently at site-4 of sodium channels (Nav) and shift the activation voltage to more negative potentials. This toxin is active against mammals.</text>
</comment>
<comment type="subcellular location">
    <subcellularLocation>
        <location evidence="7">Secreted</location>
    </subcellularLocation>
</comment>
<comment type="tissue specificity">
    <text evidence="14">Expressed by the venom gland.</text>
</comment>
<comment type="domain">
    <text evidence="13">Has the structural arrangement of an alpha-helix connected to antiparallel beta-sheets by disulfide bonds (CS-alpha/beta).</text>
</comment>
<comment type="toxic dose">
    <text>LD(50) is 20 ug/kg in mice.</text>
</comment>
<comment type="miscellaneous">
    <text evidence="4">Is neutralized by the single-chain antibody fragment 10FG2.</text>
</comment>
<comment type="similarity">
    <text evidence="13">Belongs to the long (4 C-C) scorpion toxin superfamily. Sodium channel inhibitor family. Beta subfamily.</text>
</comment>
<name>SCX2_CENNO</name>
<organism>
    <name type="scientific">Centruroides noxius</name>
    <name type="common">Mexican scorpion</name>
    <dbReference type="NCBI Taxonomy" id="6878"/>
    <lineage>
        <taxon>Eukaryota</taxon>
        <taxon>Metazoa</taxon>
        <taxon>Ecdysozoa</taxon>
        <taxon>Arthropoda</taxon>
        <taxon>Chelicerata</taxon>
        <taxon>Arachnida</taxon>
        <taxon>Scorpiones</taxon>
        <taxon>Buthida</taxon>
        <taxon>Buthoidea</taxon>
        <taxon>Buthidae</taxon>
        <taxon>Centruroides</taxon>
    </lineage>
</organism>
<keyword id="KW-0002">3D-structure</keyword>
<keyword id="KW-0027">Amidation</keyword>
<keyword id="KW-0903">Direct protein sequencing</keyword>
<keyword id="KW-1015">Disulfide bond</keyword>
<keyword id="KW-0872">Ion channel impairing toxin</keyword>
<keyword id="KW-0528">Neurotoxin</keyword>
<keyword id="KW-0964">Secreted</keyword>
<keyword id="KW-0732">Signal</keyword>
<keyword id="KW-0800">Toxin</keyword>
<keyword id="KW-0738">Voltage-gated sodium channel impairing toxin</keyword>
<feature type="signal peptide" evidence="3 7">
    <location>
        <begin position="1" status="less than"/>
        <end position="16"/>
    </location>
</feature>
<feature type="chain" id="PRO_0000035280" description="Beta-mammal toxin Cn2">
    <location>
        <begin position="17"/>
        <end position="82"/>
    </location>
</feature>
<feature type="domain" description="LCN-type CS-alpha/beta" evidence="1">
    <location>
        <begin position="17"/>
        <end position="82"/>
    </location>
</feature>
<feature type="modified residue" description="Serine amide" evidence="6">
    <location>
        <position position="82"/>
    </location>
</feature>
<feature type="disulfide bond" evidence="2 5 15 16 17 18">
    <location>
        <begin position="28"/>
        <end position="81"/>
    </location>
</feature>
<feature type="disulfide bond" evidence="2 5 15 16 17 18">
    <location>
        <begin position="32"/>
        <end position="57"/>
    </location>
</feature>
<feature type="disulfide bond" evidence="2 5 15 16 17 18">
    <location>
        <begin position="41"/>
        <end position="62"/>
    </location>
</feature>
<feature type="disulfide bond" evidence="2 5 15 16 17 18">
    <location>
        <begin position="45"/>
        <end position="64"/>
    </location>
</feature>
<feature type="sequence conflict" description="In Ref. 3; AAR08045." evidence="13" ref="3">
    <location>
        <position position="24"/>
    </location>
</feature>
<feature type="sequence conflict" description="In Ref. 2; AA sequence." evidence="13" ref="2">
    <original>YG</original>
    <variation>GY</variation>
    <location>
        <begin position="49"/>
        <end position="50"/>
    </location>
</feature>
<feature type="non-terminal residue">
    <location>
        <position position="1"/>
    </location>
</feature>
<feature type="turn" evidence="20">
    <location>
        <begin position="24"/>
        <end position="26"/>
    </location>
</feature>
<feature type="strand" evidence="21">
    <location>
        <begin position="33"/>
        <end position="37"/>
    </location>
</feature>
<feature type="helix" evidence="20">
    <location>
        <begin position="39"/>
        <end position="49"/>
    </location>
</feature>
<feature type="strand" evidence="20">
    <location>
        <begin position="54"/>
        <end position="58"/>
    </location>
</feature>
<feature type="strand" evidence="20">
    <location>
        <begin position="61"/>
        <end position="66"/>
    </location>
</feature>
<feature type="strand" evidence="19">
    <location>
        <begin position="77"/>
        <end position="79"/>
    </location>
</feature>
<accession>P01495</accession>
<accession>Q26461</accession>
<accession>Q6V4Y0</accession>
<evidence type="ECO:0000255" key="1">
    <source>
        <dbReference type="PROSITE-ProRule" id="PRU01210"/>
    </source>
</evidence>
<evidence type="ECO:0000269" key="2">
    <source>
    </source>
</evidence>
<evidence type="ECO:0000269" key="3">
    <source>
    </source>
</evidence>
<evidence type="ECO:0000269" key="4">
    <source>
    </source>
</evidence>
<evidence type="ECO:0000269" key="5">
    <source>
    </source>
</evidence>
<evidence type="ECO:0000269" key="6">
    <source>
    </source>
</evidence>
<evidence type="ECO:0000269" key="7">
    <source ref="4"/>
</evidence>
<evidence type="ECO:0000303" key="8">
    <source>
    </source>
</evidence>
<evidence type="ECO:0000303" key="9">
    <source>
    </source>
</evidence>
<evidence type="ECO:0000303" key="10">
    <source>
    </source>
</evidence>
<evidence type="ECO:0000303" key="11">
    <source>
    </source>
</evidence>
<evidence type="ECO:0000303" key="12">
    <source ref="4"/>
</evidence>
<evidence type="ECO:0000305" key="13"/>
<evidence type="ECO:0000305" key="14">
    <source ref="4"/>
</evidence>
<evidence type="ECO:0007744" key="15">
    <source>
        <dbReference type="PDB" id="1CN2"/>
    </source>
</evidence>
<evidence type="ECO:0007744" key="16">
    <source>
        <dbReference type="PDB" id="2YBR"/>
    </source>
</evidence>
<evidence type="ECO:0007744" key="17">
    <source>
        <dbReference type="PDB" id="2YC1"/>
    </source>
</evidence>
<evidence type="ECO:0007744" key="18">
    <source>
        <dbReference type="PDB" id="4V1D"/>
    </source>
</evidence>
<evidence type="ECO:0007829" key="19">
    <source>
        <dbReference type="PDB" id="1CN2"/>
    </source>
</evidence>
<evidence type="ECO:0007829" key="20">
    <source>
        <dbReference type="PDB" id="2YC1"/>
    </source>
</evidence>
<evidence type="ECO:0007829" key="21">
    <source>
        <dbReference type="PDB" id="4V1D"/>
    </source>
</evidence>
<proteinExistence type="evidence at protein level"/>
<protein>
    <recommendedName>
        <fullName evidence="8 9 10 11">Beta-mammal toxin Cn2</fullName>
        <shortName evidence="8 9 10 11">Toxin 2</shortName>
    </recommendedName>
    <alternativeName>
        <fullName evidence="12">Toxin II.9.2.2</fullName>
    </alternativeName>
</protein>
<sequence>LLIITACLALIGTVWAKEGYLVDKNTGCKYECLKLGDNDYCLRECKQQYGKGAGGYCYAFACWCTHLYEQAIVWPLPNKRCSGK</sequence>